<sequence>MTWHILGAGSLGSLWAARLGRAGLPVRLILRDRQRLRRYQQAGGLSLVEDGQASLYPIAAETPDGGQPIQRLLLACKAYDAEEAASSVAHRLAGNAELLLLQNGLGSQQAVAARLPRSRCLFASSTEGAFRDGDFRVVFAGRGHTWLGDPRDTNAPAWLTQLSQAGIPHSWSDDILERLWRKLALNCAINPLTVLHDCRNGGLRQHPEEIAALCDELGQLLHASGYDAAARSLLEDVRAVIDATAANYSSMHQDVTRGRRTEIGYLLGYACQHGQRLGLPLPRLGTLLARLQAHLRQRGLPDR</sequence>
<proteinExistence type="evidence at protein level"/>
<name>PANE_PSEAE</name>
<accession>Q9HW09</accession>
<feature type="chain" id="PRO_0000157308" description="2-dehydropantoate 2-reductase">
    <location>
        <begin position="1"/>
        <end position="303"/>
    </location>
</feature>
<feature type="active site" description="Proton donor" evidence="1">
    <location>
        <position position="182"/>
    </location>
</feature>
<feature type="binding site" evidence="2">
    <location>
        <begin position="7"/>
        <end position="12"/>
    </location>
    <ligand>
        <name>NADP(+)</name>
        <dbReference type="ChEBI" id="CHEBI:58349"/>
    </ligand>
</feature>
<feature type="binding site" evidence="2">
    <location>
        <position position="35"/>
    </location>
    <ligand>
        <name>NADP(+)</name>
        <dbReference type="ChEBI" id="CHEBI:58349"/>
    </ligand>
</feature>
<feature type="binding site" evidence="2">
    <location>
        <position position="103"/>
    </location>
    <ligand>
        <name>NADP(+)</name>
        <dbReference type="ChEBI" id="CHEBI:58349"/>
    </ligand>
</feature>
<feature type="binding site" evidence="1">
    <location>
        <position position="103"/>
    </location>
    <ligand>
        <name>substrate</name>
    </ligand>
</feature>
<feature type="binding site" evidence="2">
    <location>
        <position position="129"/>
    </location>
    <ligand>
        <name>NADP(+)</name>
        <dbReference type="ChEBI" id="CHEBI:58349"/>
    </ligand>
</feature>
<feature type="binding site" evidence="2">
    <location>
        <position position="131"/>
    </location>
    <ligand>
        <name>NADP(+)</name>
        <dbReference type="ChEBI" id="CHEBI:58349"/>
    </ligand>
</feature>
<feature type="binding site" evidence="1">
    <location>
        <position position="186"/>
    </location>
    <ligand>
        <name>substrate</name>
    </ligand>
</feature>
<feature type="binding site" evidence="1">
    <location>
        <position position="190"/>
    </location>
    <ligand>
        <name>substrate</name>
    </ligand>
</feature>
<feature type="binding site" evidence="1">
    <location>
        <position position="200"/>
    </location>
    <ligand>
        <name>substrate</name>
    </ligand>
</feature>
<feature type="binding site" evidence="1">
    <location>
        <position position="250"/>
    </location>
    <ligand>
        <name>substrate</name>
    </ligand>
</feature>
<feature type="binding site" evidence="2">
    <location>
        <position position="262"/>
    </location>
    <ligand>
        <name>NADP(+)</name>
        <dbReference type="ChEBI" id="CHEBI:58349"/>
    </ligand>
</feature>
<feature type="strand" evidence="6">
    <location>
        <begin position="3"/>
        <end position="7"/>
    </location>
</feature>
<feature type="helix" evidence="6">
    <location>
        <begin position="10"/>
        <end position="21"/>
    </location>
</feature>
<feature type="strand" evidence="6">
    <location>
        <begin position="26"/>
        <end position="29"/>
    </location>
</feature>
<feature type="helix" evidence="6">
    <location>
        <begin position="33"/>
        <end position="42"/>
    </location>
</feature>
<feature type="strand" evidence="6">
    <location>
        <begin position="44"/>
        <end position="49"/>
    </location>
</feature>
<feature type="strand" evidence="6">
    <location>
        <begin position="52"/>
        <end position="56"/>
    </location>
</feature>
<feature type="strand" evidence="6">
    <location>
        <begin position="59"/>
        <end position="61"/>
    </location>
</feature>
<feature type="strand" evidence="6">
    <location>
        <begin position="63"/>
        <end position="67"/>
    </location>
</feature>
<feature type="strand" evidence="6">
    <location>
        <begin position="69"/>
        <end position="74"/>
    </location>
</feature>
<feature type="helix" evidence="6">
    <location>
        <begin position="78"/>
        <end position="80"/>
    </location>
</feature>
<feature type="helix" evidence="6">
    <location>
        <begin position="81"/>
        <end position="87"/>
    </location>
</feature>
<feature type="helix" evidence="6">
    <location>
        <begin position="88"/>
        <end position="91"/>
    </location>
</feature>
<feature type="strand" evidence="6">
    <location>
        <begin position="92"/>
        <end position="100"/>
    </location>
</feature>
<feature type="strand" evidence="6">
    <location>
        <begin position="103"/>
        <end position="106"/>
    </location>
</feature>
<feature type="helix" evidence="6">
    <location>
        <begin position="107"/>
        <end position="114"/>
    </location>
</feature>
<feature type="strand" evidence="6">
    <location>
        <begin position="118"/>
        <end position="125"/>
    </location>
</feature>
<feature type="strand" evidence="6">
    <location>
        <begin position="128"/>
        <end position="133"/>
    </location>
</feature>
<feature type="strand" evidence="6">
    <location>
        <begin position="136"/>
        <end position="141"/>
    </location>
</feature>
<feature type="strand" evidence="6">
    <location>
        <begin position="145"/>
        <end position="148"/>
    </location>
</feature>
<feature type="helix" evidence="6">
    <location>
        <begin position="159"/>
        <end position="164"/>
    </location>
</feature>
<feature type="strand" evidence="6">
    <location>
        <begin position="169"/>
        <end position="171"/>
    </location>
</feature>
<feature type="helix" evidence="6">
    <location>
        <begin position="175"/>
        <end position="196"/>
    </location>
</feature>
<feature type="helix" evidence="6">
    <location>
        <begin position="200"/>
        <end position="205"/>
    </location>
</feature>
<feature type="helix" evidence="6">
    <location>
        <begin position="207"/>
        <end position="223"/>
    </location>
</feature>
<feature type="helix" evidence="6">
    <location>
        <begin position="227"/>
        <end position="243"/>
    </location>
</feature>
<feature type="turn" evidence="6">
    <location>
        <begin position="244"/>
        <end position="246"/>
    </location>
</feature>
<feature type="helix" evidence="6">
    <location>
        <begin position="250"/>
        <end position="256"/>
    </location>
</feature>
<feature type="helix" evidence="6">
    <location>
        <begin position="263"/>
        <end position="265"/>
    </location>
</feature>
<feature type="helix" evidence="6">
    <location>
        <begin position="267"/>
        <end position="276"/>
    </location>
</feature>
<feature type="helix" evidence="6">
    <location>
        <begin position="282"/>
        <end position="296"/>
    </location>
</feature>
<feature type="turn" evidence="6">
    <location>
        <begin position="297"/>
        <end position="299"/>
    </location>
</feature>
<dbReference type="EC" id="1.1.1.169" evidence="1"/>
<dbReference type="EMBL" id="AE004091">
    <property type="protein sequence ID" value="AAG07785.1"/>
    <property type="molecule type" value="Genomic_DNA"/>
</dbReference>
<dbReference type="PIR" id="E83096">
    <property type="entry name" value="E83096"/>
</dbReference>
<dbReference type="RefSeq" id="NP_253087.1">
    <property type="nucleotide sequence ID" value="NC_002516.2"/>
</dbReference>
<dbReference type="RefSeq" id="WP_003106518.1">
    <property type="nucleotide sequence ID" value="NZ_QZGE01000004.1"/>
</dbReference>
<dbReference type="PDB" id="5ZIK">
    <property type="method" value="X-ray"/>
    <property type="resolution" value="2.45 A"/>
    <property type="chains" value="A/B/C=1-303"/>
</dbReference>
<dbReference type="PDB" id="5ZIX">
    <property type="method" value="X-ray"/>
    <property type="resolution" value="2.57 A"/>
    <property type="chains" value="A/B/C=1-303"/>
</dbReference>
<dbReference type="PDB" id="6K1R">
    <property type="method" value="X-ray"/>
    <property type="resolution" value="2.55 A"/>
    <property type="chains" value="A/B/C=1-303"/>
</dbReference>
<dbReference type="PDBsum" id="5ZIK"/>
<dbReference type="PDBsum" id="5ZIX"/>
<dbReference type="PDBsum" id="6K1R"/>
<dbReference type="SMR" id="Q9HW09"/>
<dbReference type="FunCoup" id="Q9HW09">
    <property type="interactions" value="430"/>
</dbReference>
<dbReference type="STRING" id="208964.PA4397"/>
<dbReference type="PaxDb" id="208964-PA4397"/>
<dbReference type="GeneID" id="881354"/>
<dbReference type="KEGG" id="pae:PA4397"/>
<dbReference type="PATRIC" id="fig|208964.12.peg.4605"/>
<dbReference type="PseudoCAP" id="PA4397"/>
<dbReference type="HOGENOM" id="CLU_031468_0_1_6"/>
<dbReference type="InParanoid" id="Q9HW09"/>
<dbReference type="OrthoDB" id="6530772at2"/>
<dbReference type="PhylomeDB" id="Q9HW09"/>
<dbReference type="BioCyc" id="PAER208964:G1FZ6-4483-MONOMER"/>
<dbReference type="UniPathway" id="UPA00028">
    <property type="reaction ID" value="UER00004"/>
</dbReference>
<dbReference type="Proteomes" id="UP000002438">
    <property type="component" value="Chromosome"/>
</dbReference>
<dbReference type="GO" id="GO:0005737">
    <property type="term" value="C:cytoplasm"/>
    <property type="evidence" value="ECO:0000318"/>
    <property type="project" value="GO_Central"/>
</dbReference>
<dbReference type="GO" id="GO:0008677">
    <property type="term" value="F:2-dehydropantoate 2-reductase activity"/>
    <property type="evidence" value="ECO:0000318"/>
    <property type="project" value="GO_Central"/>
</dbReference>
<dbReference type="GO" id="GO:0050661">
    <property type="term" value="F:NADP binding"/>
    <property type="evidence" value="ECO:0000318"/>
    <property type="project" value="GO_Central"/>
</dbReference>
<dbReference type="GO" id="GO:0015940">
    <property type="term" value="P:pantothenate biosynthetic process"/>
    <property type="evidence" value="ECO:0007669"/>
    <property type="project" value="UniProtKB-UniPathway"/>
</dbReference>
<dbReference type="Gene3D" id="1.10.1040.10">
    <property type="entry name" value="N-(1-d-carboxylethyl)-l-norvaline Dehydrogenase, domain 2"/>
    <property type="match status" value="1"/>
</dbReference>
<dbReference type="Gene3D" id="3.40.50.720">
    <property type="entry name" value="NAD(P)-binding Rossmann-like Domain"/>
    <property type="match status" value="1"/>
</dbReference>
<dbReference type="InterPro" id="IPR008927">
    <property type="entry name" value="6-PGluconate_DH-like_C_sf"/>
</dbReference>
<dbReference type="InterPro" id="IPR013328">
    <property type="entry name" value="6PGD_dom2"/>
</dbReference>
<dbReference type="InterPro" id="IPR003710">
    <property type="entry name" value="ApbA"/>
</dbReference>
<dbReference type="InterPro" id="IPR050838">
    <property type="entry name" value="Ketopantoate_reductase"/>
</dbReference>
<dbReference type="InterPro" id="IPR013752">
    <property type="entry name" value="KPA_reductase"/>
</dbReference>
<dbReference type="InterPro" id="IPR013332">
    <property type="entry name" value="KPR_N"/>
</dbReference>
<dbReference type="InterPro" id="IPR036291">
    <property type="entry name" value="NAD(P)-bd_dom_sf"/>
</dbReference>
<dbReference type="NCBIfam" id="TIGR00745">
    <property type="entry name" value="apbA_panE"/>
    <property type="match status" value="1"/>
</dbReference>
<dbReference type="NCBIfam" id="NF004311">
    <property type="entry name" value="PRK05708.1"/>
    <property type="match status" value="1"/>
</dbReference>
<dbReference type="PANTHER" id="PTHR43765:SF2">
    <property type="entry name" value="2-DEHYDROPANTOATE 2-REDUCTASE"/>
    <property type="match status" value="1"/>
</dbReference>
<dbReference type="PANTHER" id="PTHR43765">
    <property type="entry name" value="2-DEHYDROPANTOATE 2-REDUCTASE-RELATED"/>
    <property type="match status" value="1"/>
</dbReference>
<dbReference type="Pfam" id="PF02558">
    <property type="entry name" value="ApbA"/>
    <property type="match status" value="1"/>
</dbReference>
<dbReference type="Pfam" id="PF08546">
    <property type="entry name" value="ApbA_C"/>
    <property type="match status" value="1"/>
</dbReference>
<dbReference type="SUPFAM" id="SSF48179">
    <property type="entry name" value="6-phosphogluconate dehydrogenase C-terminal domain-like"/>
    <property type="match status" value="1"/>
</dbReference>
<dbReference type="SUPFAM" id="SSF51735">
    <property type="entry name" value="NAD(P)-binding Rossmann-fold domains"/>
    <property type="match status" value="1"/>
</dbReference>
<keyword id="KW-0002">3D-structure</keyword>
<keyword id="KW-0963">Cytoplasm</keyword>
<keyword id="KW-0521">NADP</keyword>
<keyword id="KW-0560">Oxidoreductase</keyword>
<keyword id="KW-0566">Pantothenate biosynthesis</keyword>
<keyword id="KW-1185">Reference proteome</keyword>
<protein>
    <recommendedName>
        <fullName evidence="1">2-dehydropantoate 2-reductase</fullName>
        <ecNumber evidence="1">1.1.1.169</ecNumber>
    </recommendedName>
    <alternativeName>
        <fullName evidence="1">Ketopantoate reductase</fullName>
        <shortName evidence="1">KPR</shortName>
    </alternativeName>
</protein>
<reference key="1">
    <citation type="journal article" date="2000" name="Nature">
        <title>Complete genome sequence of Pseudomonas aeruginosa PAO1, an opportunistic pathogen.</title>
        <authorList>
            <person name="Stover C.K."/>
            <person name="Pham X.-Q.T."/>
            <person name="Erwin A.L."/>
            <person name="Mizoguchi S.D."/>
            <person name="Warrener P."/>
            <person name="Hickey M.J."/>
            <person name="Brinkman F.S.L."/>
            <person name="Hufnagle W.O."/>
            <person name="Kowalik D.J."/>
            <person name="Lagrou M."/>
            <person name="Garber R.L."/>
            <person name="Goltry L."/>
            <person name="Tolentino E."/>
            <person name="Westbrock-Wadman S."/>
            <person name="Yuan Y."/>
            <person name="Brody L.L."/>
            <person name="Coulter S.N."/>
            <person name="Folger K.R."/>
            <person name="Kas A."/>
            <person name="Larbig K."/>
            <person name="Lim R.M."/>
            <person name="Smith K.A."/>
            <person name="Spencer D.H."/>
            <person name="Wong G.K.-S."/>
            <person name="Wu Z."/>
            <person name="Paulsen I.T."/>
            <person name="Reizer J."/>
            <person name="Saier M.H. Jr."/>
            <person name="Hancock R.E.W."/>
            <person name="Lory S."/>
            <person name="Olson M.V."/>
        </authorList>
    </citation>
    <scope>NUCLEOTIDE SEQUENCE [LARGE SCALE GENOMIC DNA]</scope>
    <source>
        <strain>ATCC 15692 / DSM 22644 / CIP 104116 / JCM 14847 / LMG 12228 / 1C / PRS 101 / PAO1</strain>
    </source>
</reference>
<reference evidence="4" key="2">
    <citation type="submission" date="2018-03" db="PDB data bank">
        <title>Crystal structure of ketopantoate reductase from Pseudomonas aeruginosa.</title>
        <authorList>
            <person name="Khanppnavar B."/>
            <person name="Datta S."/>
        </authorList>
    </citation>
    <scope>X-RAY CRYSTALLOGRAPHY (2.45 ANGSTROMS)</scope>
</reference>
<reference evidence="5" key="3">
    <citation type="submission" date="2018-03" db="PDB data bank">
        <title>Crystal structure of Ketopantoate reductase from Pseudomonas aeruginosa bound to NADP+.</title>
        <authorList>
            <person name="Khanppnavar B."/>
            <person name="Datta S."/>
        </authorList>
    </citation>
    <scope>X-RAY CRYSTALLOGRAPHY (2.57 ANGSTROMS) IN COMPLEX WITH NADP</scope>
</reference>
<organism>
    <name type="scientific">Pseudomonas aeruginosa (strain ATCC 15692 / DSM 22644 / CIP 104116 / JCM 14847 / LMG 12228 / 1C / PRS 101 / PAO1)</name>
    <dbReference type="NCBI Taxonomy" id="208964"/>
    <lineage>
        <taxon>Bacteria</taxon>
        <taxon>Pseudomonadati</taxon>
        <taxon>Pseudomonadota</taxon>
        <taxon>Gammaproteobacteria</taxon>
        <taxon>Pseudomonadales</taxon>
        <taxon>Pseudomonadaceae</taxon>
        <taxon>Pseudomonas</taxon>
    </lineage>
</organism>
<gene>
    <name type="primary">panE</name>
    <name type="ordered locus">PA4397</name>
</gene>
<comment type="function">
    <text evidence="1">Catalyzes the NADPH-dependent reduction of ketopantoate into pantoic acid.</text>
</comment>
<comment type="catalytic activity">
    <reaction evidence="1">
        <text>(R)-pantoate + NADP(+) = 2-dehydropantoate + NADPH + H(+)</text>
        <dbReference type="Rhea" id="RHEA:16233"/>
        <dbReference type="ChEBI" id="CHEBI:11561"/>
        <dbReference type="ChEBI" id="CHEBI:15378"/>
        <dbReference type="ChEBI" id="CHEBI:15980"/>
        <dbReference type="ChEBI" id="CHEBI:57783"/>
        <dbReference type="ChEBI" id="CHEBI:58349"/>
        <dbReference type="EC" id="1.1.1.169"/>
    </reaction>
</comment>
<comment type="pathway">
    <text evidence="1">Cofactor biosynthesis; (R)-pantothenate biosynthesis; (R)-pantoate from 3-methyl-2-oxobutanoate: step 2/2.</text>
</comment>
<comment type="subcellular location">
    <subcellularLocation>
        <location evidence="1">Cytoplasm</location>
    </subcellularLocation>
</comment>
<comment type="similarity">
    <text evidence="3">Belongs to the ketopantoate reductase family.</text>
</comment>
<evidence type="ECO:0000250" key="1">
    <source>
        <dbReference type="UniProtKB" id="P0A9J4"/>
    </source>
</evidence>
<evidence type="ECO:0000269" key="2">
    <source ref="3"/>
</evidence>
<evidence type="ECO:0000305" key="3"/>
<evidence type="ECO:0007744" key="4">
    <source>
        <dbReference type="PDB" id="5ZIK"/>
    </source>
</evidence>
<evidence type="ECO:0007744" key="5">
    <source>
        <dbReference type="PDB" id="5ZIX"/>
    </source>
</evidence>
<evidence type="ECO:0007829" key="6">
    <source>
        <dbReference type="PDB" id="5ZIK"/>
    </source>
</evidence>